<dbReference type="EC" id="2.2.1.7" evidence="1"/>
<dbReference type="EMBL" id="CP000688">
    <property type="protein sequence ID" value="ABQ17259.1"/>
    <property type="molecule type" value="Genomic_DNA"/>
</dbReference>
<dbReference type="SMR" id="A5FRB9"/>
<dbReference type="KEGG" id="deb:DehaBAV1_0675"/>
<dbReference type="PATRIC" id="fig|216389.18.peg.724"/>
<dbReference type="HOGENOM" id="CLU_009227_1_4_0"/>
<dbReference type="UniPathway" id="UPA00064">
    <property type="reaction ID" value="UER00091"/>
</dbReference>
<dbReference type="GO" id="GO:0005829">
    <property type="term" value="C:cytosol"/>
    <property type="evidence" value="ECO:0007669"/>
    <property type="project" value="TreeGrafter"/>
</dbReference>
<dbReference type="GO" id="GO:0008661">
    <property type="term" value="F:1-deoxy-D-xylulose-5-phosphate synthase activity"/>
    <property type="evidence" value="ECO:0007669"/>
    <property type="project" value="UniProtKB-UniRule"/>
</dbReference>
<dbReference type="GO" id="GO:0000287">
    <property type="term" value="F:magnesium ion binding"/>
    <property type="evidence" value="ECO:0007669"/>
    <property type="project" value="UniProtKB-UniRule"/>
</dbReference>
<dbReference type="GO" id="GO:0030976">
    <property type="term" value="F:thiamine pyrophosphate binding"/>
    <property type="evidence" value="ECO:0007669"/>
    <property type="project" value="UniProtKB-UniRule"/>
</dbReference>
<dbReference type="GO" id="GO:0052865">
    <property type="term" value="P:1-deoxy-D-xylulose 5-phosphate biosynthetic process"/>
    <property type="evidence" value="ECO:0007669"/>
    <property type="project" value="UniProtKB-UniPathway"/>
</dbReference>
<dbReference type="GO" id="GO:0019288">
    <property type="term" value="P:isopentenyl diphosphate biosynthetic process, methylerythritol 4-phosphate pathway"/>
    <property type="evidence" value="ECO:0007669"/>
    <property type="project" value="TreeGrafter"/>
</dbReference>
<dbReference type="GO" id="GO:0016114">
    <property type="term" value="P:terpenoid biosynthetic process"/>
    <property type="evidence" value="ECO:0007669"/>
    <property type="project" value="UniProtKB-UniRule"/>
</dbReference>
<dbReference type="GO" id="GO:0009228">
    <property type="term" value="P:thiamine biosynthetic process"/>
    <property type="evidence" value="ECO:0007669"/>
    <property type="project" value="UniProtKB-UniRule"/>
</dbReference>
<dbReference type="CDD" id="cd02007">
    <property type="entry name" value="TPP_DXS"/>
    <property type="match status" value="1"/>
</dbReference>
<dbReference type="CDD" id="cd07033">
    <property type="entry name" value="TPP_PYR_DXS_TK_like"/>
    <property type="match status" value="1"/>
</dbReference>
<dbReference type="FunFam" id="3.40.50.920:FF:000002">
    <property type="entry name" value="1-deoxy-D-xylulose-5-phosphate synthase"/>
    <property type="match status" value="1"/>
</dbReference>
<dbReference type="FunFam" id="3.40.50.970:FF:000005">
    <property type="entry name" value="1-deoxy-D-xylulose-5-phosphate synthase"/>
    <property type="match status" value="1"/>
</dbReference>
<dbReference type="Gene3D" id="3.40.50.920">
    <property type="match status" value="1"/>
</dbReference>
<dbReference type="Gene3D" id="3.40.50.970">
    <property type="match status" value="2"/>
</dbReference>
<dbReference type="HAMAP" id="MF_00315">
    <property type="entry name" value="DXP_synth"/>
    <property type="match status" value="1"/>
</dbReference>
<dbReference type="InterPro" id="IPR005477">
    <property type="entry name" value="Dxylulose-5-P_synthase"/>
</dbReference>
<dbReference type="InterPro" id="IPR029061">
    <property type="entry name" value="THDP-binding"/>
</dbReference>
<dbReference type="InterPro" id="IPR009014">
    <property type="entry name" value="Transketo_C/PFOR_II"/>
</dbReference>
<dbReference type="InterPro" id="IPR005475">
    <property type="entry name" value="Transketolase-like_Pyr-bd"/>
</dbReference>
<dbReference type="InterPro" id="IPR033248">
    <property type="entry name" value="Transketolase_C"/>
</dbReference>
<dbReference type="InterPro" id="IPR049557">
    <property type="entry name" value="Transketolase_CS"/>
</dbReference>
<dbReference type="NCBIfam" id="TIGR00204">
    <property type="entry name" value="dxs"/>
    <property type="match status" value="1"/>
</dbReference>
<dbReference type="NCBIfam" id="NF003933">
    <property type="entry name" value="PRK05444.2-2"/>
    <property type="match status" value="1"/>
</dbReference>
<dbReference type="PANTHER" id="PTHR43322">
    <property type="entry name" value="1-D-DEOXYXYLULOSE 5-PHOSPHATE SYNTHASE-RELATED"/>
    <property type="match status" value="1"/>
</dbReference>
<dbReference type="PANTHER" id="PTHR43322:SF5">
    <property type="entry name" value="1-DEOXY-D-XYLULOSE-5-PHOSPHATE SYNTHASE, CHLOROPLASTIC"/>
    <property type="match status" value="1"/>
</dbReference>
<dbReference type="Pfam" id="PF13292">
    <property type="entry name" value="DXP_synthase_N"/>
    <property type="match status" value="1"/>
</dbReference>
<dbReference type="Pfam" id="PF02779">
    <property type="entry name" value="Transket_pyr"/>
    <property type="match status" value="1"/>
</dbReference>
<dbReference type="Pfam" id="PF02780">
    <property type="entry name" value="Transketolase_C"/>
    <property type="match status" value="1"/>
</dbReference>
<dbReference type="SMART" id="SM00861">
    <property type="entry name" value="Transket_pyr"/>
    <property type="match status" value="1"/>
</dbReference>
<dbReference type="SUPFAM" id="SSF52518">
    <property type="entry name" value="Thiamin diphosphate-binding fold (THDP-binding)"/>
    <property type="match status" value="2"/>
</dbReference>
<dbReference type="SUPFAM" id="SSF52922">
    <property type="entry name" value="TK C-terminal domain-like"/>
    <property type="match status" value="1"/>
</dbReference>
<dbReference type="PROSITE" id="PS00801">
    <property type="entry name" value="TRANSKETOLASE_1"/>
    <property type="match status" value="1"/>
</dbReference>
<accession>A5FRB9</accession>
<reference key="1">
    <citation type="submission" date="2007-05" db="EMBL/GenBank/DDBJ databases">
        <title>Complete sequence of Dehalococcoides sp. BAV1.</title>
        <authorList>
            <consortium name="US DOE Joint Genome Institute"/>
            <person name="Copeland A."/>
            <person name="Lucas S."/>
            <person name="Lapidus A."/>
            <person name="Barry K."/>
            <person name="Detter J.C."/>
            <person name="Glavina del Rio T."/>
            <person name="Hammon N."/>
            <person name="Israni S."/>
            <person name="Pitluck S."/>
            <person name="Lowry S."/>
            <person name="Clum A."/>
            <person name="Schmutz J."/>
            <person name="Larimer F."/>
            <person name="Land M."/>
            <person name="Hauser L."/>
            <person name="Kyrpides N."/>
            <person name="Kim E."/>
            <person name="Ritalahti K.M."/>
            <person name="Loeffler F."/>
            <person name="Richardson P."/>
        </authorList>
    </citation>
    <scope>NUCLEOTIDE SEQUENCE [LARGE SCALE GENOMIC DNA]</scope>
    <source>
        <strain>ATCC BAA-2100 / JCM 16839 / KCTC 5957 / BAV1</strain>
    </source>
</reference>
<comment type="function">
    <text evidence="1">Catalyzes the acyloin condensation reaction between C atoms 2 and 3 of pyruvate and glyceraldehyde 3-phosphate to yield 1-deoxy-D-xylulose-5-phosphate (DXP).</text>
</comment>
<comment type="catalytic activity">
    <reaction evidence="1">
        <text>D-glyceraldehyde 3-phosphate + pyruvate + H(+) = 1-deoxy-D-xylulose 5-phosphate + CO2</text>
        <dbReference type="Rhea" id="RHEA:12605"/>
        <dbReference type="ChEBI" id="CHEBI:15361"/>
        <dbReference type="ChEBI" id="CHEBI:15378"/>
        <dbReference type="ChEBI" id="CHEBI:16526"/>
        <dbReference type="ChEBI" id="CHEBI:57792"/>
        <dbReference type="ChEBI" id="CHEBI:59776"/>
        <dbReference type="EC" id="2.2.1.7"/>
    </reaction>
</comment>
<comment type="cofactor">
    <cofactor evidence="1">
        <name>Mg(2+)</name>
        <dbReference type="ChEBI" id="CHEBI:18420"/>
    </cofactor>
    <text evidence="1">Binds 1 Mg(2+) ion per subunit.</text>
</comment>
<comment type="cofactor">
    <cofactor evidence="1">
        <name>thiamine diphosphate</name>
        <dbReference type="ChEBI" id="CHEBI:58937"/>
    </cofactor>
    <text evidence="1">Binds 1 thiamine pyrophosphate per subunit.</text>
</comment>
<comment type="pathway">
    <text evidence="1">Metabolic intermediate biosynthesis; 1-deoxy-D-xylulose 5-phosphate biosynthesis; 1-deoxy-D-xylulose 5-phosphate from D-glyceraldehyde 3-phosphate and pyruvate: step 1/1.</text>
</comment>
<comment type="subunit">
    <text evidence="1">Homodimer.</text>
</comment>
<comment type="similarity">
    <text evidence="1">Belongs to the transketolase family. DXPS subfamily.</text>
</comment>
<organism>
    <name type="scientific">Dehalococcoides mccartyi (strain ATCC BAA-2100 / JCM 16839 / KCTC 5957 / BAV1)</name>
    <dbReference type="NCBI Taxonomy" id="216389"/>
    <lineage>
        <taxon>Bacteria</taxon>
        <taxon>Bacillati</taxon>
        <taxon>Chloroflexota</taxon>
        <taxon>Dehalococcoidia</taxon>
        <taxon>Dehalococcoidales</taxon>
        <taxon>Dehalococcoidaceae</taxon>
        <taxon>Dehalococcoides</taxon>
    </lineage>
</organism>
<name>DXS_DEHMB</name>
<protein>
    <recommendedName>
        <fullName evidence="1">1-deoxy-D-xylulose-5-phosphate synthase</fullName>
        <ecNumber evidence="1">2.2.1.7</ecNumber>
    </recommendedName>
    <alternativeName>
        <fullName evidence="1">1-deoxyxylulose-5-phosphate synthase</fullName>
        <shortName evidence="1">DXP synthase</shortName>
        <shortName evidence="1">DXPS</shortName>
    </alternativeName>
</protein>
<proteinExistence type="inferred from homology"/>
<sequence length="633" mass="68581">MSKLLDTINSPSDLKKLSLDELRELAVQIREELVNRVTLNGGHLASSLGVVELTIALHRVFESPKDKIIWDVGHQSYAHKLLTGRREQFATLRQHGGLSGFTCRDESPHDPFGAGHASTSISAGLGMAVARDLAKEDYSVISVIGDGAISGGMSFEAINNAGHLHTKFIVILNDNGMAISPSTGALSKFLNNVRFDPRFEFAKRNAKQTITNMPFGKAVWAFTKSIKRKFEKSMLPGSLWEELGFIYLGPVDGHNIRELEAALKRAKDFESKPVLIHMITKKGKGYDDAEADAVKYHGISPKSGGLKSSHGLSYSQVFGQTLHKIMSQNPQVVAITAAMTDGCGLGEIAAAFPDRVFDVGICEQHAVTFAAGMATQGYIPVVVIYSTFLQRGFDQIIHDVCLQKLPVVFAIDRGGIVGDDGKTHQGIFDLSFMSLIPDMVVSAPSDENDLQHLLYTAVNSGKPFALRYPRGFGEGVEIESSLHNIPIGQNEILVNGSDVAILATGKSVAFAREALEILTESGIKPTLVNNRYISPLDSELVLKIAQSHKYLVTVEENVISGGLGSRINTLLAEAGLVNKIKIANIGIPDKFVEHGNQSLLRAKYGLDGKGIAQRVLSLVGNPNEMKHPQIICP</sequence>
<evidence type="ECO:0000255" key="1">
    <source>
        <dbReference type="HAMAP-Rule" id="MF_00315"/>
    </source>
</evidence>
<keyword id="KW-0414">Isoprene biosynthesis</keyword>
<keyword id="KW-0460">Magnesium</keyword>
<keyword id="KW-0479">Metal-binding</keyword>
<keyword id="KW-0784">Thiamine biosynthesis</keyword>
<keyword id="KW-0786">Thiamine pyrophosphate</keyword>
<keyword id="KW-0808">Transferase</keyword>
<gene>
    <name evidence="1" type="primary">dxs</name>
    <name type="ordered locus">DehaBAV1_0675</name>
</gene>
<feature type="chain" id="PRO_1000119543" description="1-deoxy-D-xylulose-5-phosphate synthase">
    <location>
        <begin position="1"/>
        <end position="633"/>
    </location>
</feature>
<feature type="binding site" evidence="1">
    <location>
        <position position="74"/>
    </location>
    <ligand>
        <name>thiamine diphosphate</name>
        <dbReference type="ChEBI" id="CHEBI:58937"/>
    </ligand>
</feature>
<feature type="binding site" evidence="1">
    <location>
        <begin position="115"/>
        <end position="117"/>
    </location>
    <ligand>
        <name>thiamine diphosphate</name>
        <dbReference type="ChEBI" id="CHEBI:58937"/>
    </ligand>
</feature>
<feature type="binding site" evidence="1">
    <location>
        <position position="146"/>
    </location>
    <ligand>
        <name>Mg(2+)</name>
        <dbReference type="ChEBI" id="CHEBI:18420"/>
    </ligand>
</feature>
<feature type="binding site" evidence="1">
    <location>
        <begin position="147"/>
        <end position="148"/>
    </location>
    <ligand>
        <name>thiamine diphosphate</name>
        <dbReference type="ChEBI" id="CHEBI:58937"/>
    </ligand>
</feature>
<feature type="binding site" evidence="1">
    <location>
        <position position="175"/>
    </location>
    <ligand>
        <name>Mg(2+)</name>
        <dbReference type="ChEBI" id="CHEBI:18420"/>
    </ligand>
</feature>
<feature type="binding site" evidence="1">
    <location>
        <position position="175"/>
    </location>
    <ligand>
        <name>thiamine diphosphate</name>
        <dbReference type="ChEBI" id="CHEBI:58937"/>
    </ligand>
</feature>
<feature type="binding site" evidence="1">
    <location>
        <position position="286"/>
    </location>
    <ligand>
        <name>thiamine diphosphate</name>
        <dbReference type="ChEBI" id="CHEBI:58937"/>
    </ligand>
</feature>
<feature type="binding site" evidence="1">
    <location>
        <position position="363"/>
    </location>
    <ligand>
        <name>thiamine diphosphate</name>
        <dbReference type="ChEBI" id="CHEBI:58937"/>
    </ligand>
</feature>